<proteinExistence type="evidence at protein level"/>
<comment type="catalytic activity">
    <reaction evidence="1">
        <text>D-arabinose 5-phosphate + phosphoenolpyruvate + H2O = 3-deoxy-alpha-D-manno-2-octulosonate-8-phosphate + phosphate</text>
        <dbReference type="Rhea" id="RHEA:14053"/>
        <dbReference type="ChEBI" id="CHEBI:15377"/>
        <dbReference type="ChEBI" id="CHEBI:43474"/>
        <dbReference type="ChEBI" id="CHEBI:57693"/>
        <dbReference type="ChEBI" id="CHEBI:58702"/>
        <dbReference type="ChEBI" id="CHEBI:85985"/>
        <dbReference type="EC" id="2.5.1.55"/>
    </reaction>
</comment>
<comment type="pathway">
    <text evidence="1">Carbohydrate biosynthesis; 3-deoxy-D-manno-octulosonate biosynthesis; 3-deoxy-D-manno-octulosonate from D-ribulose 5-phosphate: step 2/3.</text>
</comment>
<comment type="pathway">
    <text evidence="1">Bacterial outer membrane biogenesis; lipopolysaccharide biosynthesis.</text>
</comment>
<comment type="subcellular location">
    <subcellularLocation>
        <location evidence="1">Cytoplasm</location>
    </subcellularLocation>
</comment>
<comment type="similarity">
    <text evidence="1">Belongs to the KdsA family.</text>
</comment>
<keyword id="KW-0002">3D-structure</keyword>
<keyword id="KW-0963">Cytoplasm</keyword>
<keyword id="KW-0448">Lipopolysaccharide biosynthesis</keyword>
<keyword id="KW-0808">Transferase</keyword>
<name>KDSA_BRUME</name>
<accession>Q8YHF1</accession>
<organism>
    <name type="scientific">Brucella melitensis biotype 1 (strain ATCC 23456 / CCUG 17765 / NCTC 10094 / 16M)</name>
    <dbReference type="NCBI Taxonomy" id="224914"/>
    <lineage>
        <taxon>Bacteria</taxon>
        <taxon>Pseudomonadati</taxon>
        <taxon>Pseudomonadota</taxon>
        <taxon>Alphaproteobacteria</taxon>
        <taxon>Hyphomicrobiales</taxon>
        <taxon>Brucellaceae</taxon>
        <taxon>Brucella/Ochrobactrum group</taxon>
        <taxon>Brucella</taxon>
    </lineage>
</organism>
<feature type="chain" id="PRO_0000187107" description="2-dehydro-3-deoxyphosphooctonate aldolase">
    <location>
        <begin position="1"/>
        <end position="277"/>
    </location>
</feature>
<feature type="strand" evidence="2">
    <location>
        <begin position="6"/>
        <end position="10"/>
    </location>
</feature>
<feature type="strand" evidence="2">
    <location>
        <begin position="13"/>
        <end position="15"/>
    </location>
</feature>
<feature type="strand" evidence="2">
    <location>
        <begin position="22"/>
        <end position="26"/>
    </location>
</feature>
<feature type="helix" evidence="2">
    <location>
        <begin position="33"/>
        <end position="50"/>
    </location>
</feature>
<feature type="strand" evidence="2">
    <location>
        <begin position="54"/>
        <end position="57"/>
    </location>
</feature>
<feature type="helix" evidence="2">
    <location>
        <begin position="76"/>
        <end position="90"/>
    </location>
</feature>
<feature type="strand" evidence="2">
    <location>
        <begin position="94"/>
        <end position="97"/>
    </location>
</feature>
<feature type="helix" evidence="2">
    <location>
        <begin position="101"/>
        <end position="107"/>
    </location>
</feature>
<feature type="turn" evidence="2">
    <location>
        <begin position="108"/>
        <end position="110"/>
    </location>
</feature>
<feature type="strand" evidence="2">
    <location>
        <begin position="112"/>
        <end position="116"/>
    </location>
</feature>
<feature type="helix" evidence="2">
    <location>
        <begin position="118"/>
        <end position="120"/>
    </location>
</feature>
<feature type="helix" evidence="2">
    <location>
        <begin position="124"/>
        <end position="132"/>
    </location>
</feature>
<feature type="strand" evidence="2">
    <location>
        <begin position="135"/>
        <end position="140"/>
    </location>
</feature>
<feature type="helix" evidence="2">
    <location>
        <begin position="147"/>
        <end position="149"/>
    </location>
</feature>
<feature type="helix" evidence="2">
    <location>
        <begin position="150"/>
        <end position="158"/>
    </location>
</feature>
<feature type="turn" evidence="2">
    <location>
        <begin position="159"/>
        <end position="161"/>
    </location>
</feature>
<feature type="strand" evidence="2">
    <location>
        <begin position="165"/>
        <end position="169"/>
    </location>
</feature>
<feature type="strand" evidence="2">
    <location>
        <begin position="175"/>
        <end position="177"/>
    </location>
</feature>
<feature type="helix" evidence="2">
    <location>
        <begin position="185"/>
        <end position="190"/>
    </location>
</feature>
<feature type="turn" evidence="2">
    <location>
        <begin position="191"/>
        <end position="193"/>
    </location>
</feature>
<feature type="strand" evidence="2">
    <location>
        <begin position="196"/>
        <end position="199"/>
    </location>
</feature>
<feature type="helix" evidence="2">
    <location>
        <begin position="200"/>
        <end position="203"/>
    </location>
</feature>
<feature type="helix" evidence="2">
    <location>
        <begin position="218"/>
        <end position="220"/>
    </location>
</feature>
<feature type="helix" evidence="2">
    <location>
        <begin position="221"/>
        <end position="231"/>
    </location>
</feature>
<feature type="strand" evidence="2">
    <location>
        <begin position="234"/>
        <end position="243"/>
    </location>
</feature>
<feature type="helix" evidence="2">
    <location>
        <begin position="244"/>
        <end position="246"/>
    </location>
</feature>
<feature type="strand" evidence="2">
    <location>
        <begin position="248"/>
        <end position="250"/>
    </location>
</feature>
<feature type="helix" evidence="2">
    <location>
        <begin position="251"/>
        <end position="253"/>
    </location>
</feature>
<feature type="helix" evidence="2">
    <location>
        <begin position="257"/>
        <end position="259"/>
    </location>
</feature>
<feature type="helix" evidence="2">
    <location>
        <begin position="260"/>
        <end position="274"/>
    </location>
</feature>
<gene>
    <name evidence="1" type="primary">kdsA</name>
    <name type="ordered locus">BMEI0850</name>
</gene>
<dbReference type="EC" id="2.5.1.55" evidence="1"/>
<dbReference type="EMBL" id="AE008917">
    <property type="protein sequence ID" value="AAL52031.1"/>
    <property type="molecule type" value="Genomic_DNA"/>
</dbReference>
<dbReference type="PIR" id="AD3358">
    <property type="entry name" value="AD3358"/>
</dbReference>
<dbReference type="RefSeq" id="WP_002964262.1">
    <property type="nucleotide sequence ID" value="NZ_GG703780.1"/>
</dbReference>
<dbReference type="PDB" id="3FS2">
    <property type="method" value="X-ray"/>
    <property type="resolution" value="1.85 A"/>
    <property type="chains" value="A/B=1-277"/>
</dbReference>
<dbReference type="PDBsum" id="3FS2"/>
<dbReference type="SMR" id="Q8YHF1"/>
<dbReference type="GeneID" id="97533614"/>
<dbReference type="KEGG" id="bme:BMEI0850"/>
<dbReference type="KEGG" id="bmel:DK63_570"/>
<dbReference type="PATRIC" id="fig|224914.52.peg.593"/>
<dbReference type="eggNOG" id="COG2877">
    <property type="taxonomic scope" value="Bacteria"/>
</dbReference>
<dbReference type="PhylomeDB" id="Q8YHF1"/>
<dbReference type="UniPathway" id="UPA00030"/>
<dbReference type="UniPathway" id="UPA00357">
    <property type="reaction ID" value="UER00474"/>
</dbReference>
<dbReference type="EvolutionaryTrace" id="Q8YHF1"/>
<dbReference type="Proteomes" id="UP000000419">
    <property type="component" value="Chromosome I"/>
</dbReference>
<dbReference type="GO" id="GO:0005737">
    <property type="term" value="C:cytoplasm"/>
    <property type="evidence" value="ECO:0007669"/>
    <property type="project" value="UniProtKB-SubCell"/>
</dbReference>
<dbReference type="GO" id="GO:0008676">
    <property type="term" value="F:3-deoxy-8-phosphooctulonate synthase activity"/>
    <property type="evidence" value="ECO:0007669"/>
    <property type="project" value="UniProtKB-UniRule"/>
</dbReference>
<dbReference type="GO" id="GO:0019294">
    <property type="term" value="P:keto-3-deoxy-D-manno-octulosonic acid biosynthetic process"/>
    <property type="evidence" value="ECO:0007669"/>
    <property type="project" value="UniProtKB-UniRule"/>
</dbReference>
<dbReference type="Gene3D" id="3.20.20.70">
    <property type="entry name" value="Aldolase class I"/>
    <property type="match status" value="1"/>
</dbReference>
<dbReference type="HAMAP" id="MF_00056">
    <property type="entry name" value="KDO8P_synth"/>
    <property type="match status" value="1"/>
</dbReference>
<dbReference type="InterPro" id="IPR013785">
    <property type="entry name" value="Aldolase_TIM"/>
</dbReference>
<dbReference type="InterPro" id="IPR006218">
    <property type="entry name" value="DAHP1/KDSA"/>
</dbReference>
<dbReference type="InterPro" id="IPR006269">
    <property type="entry name" value="KDO8P_synthase"/>
</dbReference>
<dbReference type="NCBIfam" id="TIGR01362">
    <property type="entry name" value="KDO8P_synth"/>
    <property type="match status" value="1"/>
</dbReference>
<dbReference type="NCBIfam" id="NF003543">
    <property type="entry name" value="PRK05198.1"/>
    <property type="match status" value="1"/>
</dbReference>
<dbReference type="PANTHER" id="PTHR21057">
    <property type="entry name" value="PHOSPHO-2-DEHYDRO-3-DEOXYHEPTONATE ALDOLASE"/>
    <property type="match status" value="1"/>
</dbReference>
<dbReference type="Pfam" id="PF00793">
    <property type="entry name" value="DAHP_synth_1"/>
    <property type="match status" value="1"/>
</dbReference>
<dbReference type="SUPFAM" id="SSF51569">
    <property type="entry name" value="Aldolase"/>
    <property type="match status" value="1"/>
</dbReference>
<protein>
    <recommendedName>
        <fullName evidence="1">2-dehydro-3-deoxyphosphooctonate aldolase</fullName>
        <ecNumber evidence="1">2.5.1.55</ecNumber>
    </recommendedName>
    <alternativeName>
        <fullName evidence="1">3-deoxy-D-manno-octulosonic acid 8-phosphate synthase</fullName>
    </alternativeName>
    <alternativeName>
        <fullName evidence="1">KDO-8-phosphate synthase</fullName>
        <shortName evidence="1">KDO 8-P synthase</shortName>
        <shortName evidence="1">KDOPS</shortName>
    </alternativeName>
    <alternativeName>
        <fullName evidence="1">Phospho-2-dehydro-3-deoxyoctonate aldolase</fullName>
    </alternativeName>
</protein>
<evidence type="ECO:0000255" key="1">
    <source>
        <dbReference type="HAMAP-Rule" id="MF_00056"/>
    </source>
</evidence>
<evidence type="ECO:0007829" key="2">
    <source>
        <dbReference type="PDB" id="3FS2"/>
    </source>
</evidence>
<reference key="1">
    <citation type="journal article" date="2002" name="Proc. Natl. Acad. Sci. U.S.A.">
        <title>The genome sequence of the facultative intracellular pathogen Brucella melitensis.</title>
        <authorList>
            <person name="DelVecchio V.G."/>
            <person name="Kapatral V."/>
            <person name="Redkar R.J."/>
            <person name="Patra G."/>
            <person name="Mujer C."/>
            <person name="Los T."/>
            <person name="Ivanova N."/>
            <person name="Anderson I."/>
            <person name="Bhattacharyya A."/>
            <person name="Lykidis A."/>
            <person name="Reznik G."/>
            <person name="Jablonski L."/>
            <person name="Larsen N."/>
            <person name="D'Souza M."/>
            <person name="Bernal A."/>
            <person name="Mazur M."/>
            <person name="Goltsman E."/>
            <person name="Selkov E."/>
            <person name="Elzer P.H."/>
            <person name="Hagius S."/>
            <person name="O'Callaghan D."/>
            <person name="Letesson J.-J."/>
            <person name="Haselkorn R."/>
            <person name="Kyrpides N.C."/>
            <person name="Overbeek R."/>
        </authorList>
    </citation>
    <scope>NUCLEOTIDE SEQUENCE [LARGE SCALE GENOMIC DNA]</scope>
    <source>
        <strain>ATCC 23456 / CCUG 17765 / NCTC 10094 / 16M</strain>
    </source>
</reference>
<sequence>MVTANSTVKVGNVTFSNSAPLALIAGPCQMETRDHAFEMAGRLKEMTDKLGIGLVYKSSFDKANRTSLKAARGIGLEKALEVFSDLKKEYGFPVLTDIHTEEQCAAVAPVVDVLQIPAFLCRQTDLLIAAARTGRVVNVKKGQFLAPWDMKNVLAKITESGNPNVLATERGVSFGYNTLVSDMRALPIMAGLGAPVIFDATHSVQQPGGQGGSTGGQREFVETLARAAVAVGVAGLFIETHEDPDNAPSDGPNMVPIDKMPALLEKLMAFDRIAKAL</sequence>